<sequence>MSTAGKVIKCKAAVLWELKKPFSIEEVEVAPPKAQEVRIKMVAVGICGTDDHVVSGTMVTPLPAILGHEAAGIVESVGEGVTTVKPGDKVIPLAVPQCGKCRICKNPESNYCLKNDVSNPQGTLQDGTSRFTCRGKPIHHFLGISTFSQYTVVDENAVAKIDAASPLAKVCLIGCGFSTGYGSAVNVAKVTPGSTCAVFGLGGVGLSVVMGCKAAGAARIIAVDINKDKFAKAKELGATECINPQDYNKPIQEVLKEMTDGGVDFSFEVIGRLDTMMASLLCCHEACGTSVIVGVPPDSQNLSMNPMLLLTGRTWKGAVLGGFKSKECVPKLVADFMAKKFSLDALITHVLPFEKINDGFDLLHSGKSIRTILMF</sequence>
<feature type="initiator methionine" description="Removed" evidence="2">
    <location>
        <position position="1"/>
    </location>
</feature>
<feature type="chain" id="PRO_0000160660" description="Alcohol dehydrogenase 1A">
    <location>
        <begin position="2"/>
        <end position="375"/>
    </location>
</feature>
<feature type="binding site" evidence="2">
    <location>
        <position position="47"/>
    </location>
    <ligand>
        <name>Zn(2+)</name>
        <dbReference type="ChEBI" id="CHEBI:29105"/>
        <label>1</label>
        <note>catalytic</note>
    </ligand>
</feature>
<feature type="binding site" evidence="2">
    <location>
        <begin position="48"/>
        <end position="52"/>
    </location>
    <ligand>
        <name>NAD(+)</name>
        <dbReference type="ChEBI" id="CHEBI:57540"/>
    </ligand>
</feature>
<feature type="binding site" evidence="2">
    <location>
        <position position="68"/>
    </location>
    <ligand>
        <name>Zn(2+)</name>
        <dbReference type="ChEBI" id="CHEBI:29105"/>
        <label>1</label>
        <note>catalytic</note>
    </ligand>
</feature>
<feature type="binding site" evidence="2">
    <location>
        <position position="98"/>
    </location>
    <ligand>
        <name>Zn(2+)</name>
        <dbReference type="ChEBI" id="CHEBI:29105"/>
        <label>2</label>
    </ligand>
</feature>
<feature type="binding site" evidence="2">
    <location>
        <position position="101"/>
    </location>
    <ligand>
        <name>Zn(2+)</name>
        <dbReference type="ChEBI" id="CHEBI:29105"/>
        <label>2</label>
    </ligand>
</feature>
<feature type="binding site" evidence="2">
    <location>
        <position position="104"/>
    </location>
    <ligand>
        <name>Zn(2+)</name>
        <dbReference type="ChEBI" id="CHEBI:29105"/>
        <label>2</label>
    </ligand>
</feature>
<feature type="binding site" evidence="2">
    <location>
        <position position="112"/>
    </location>
    <ligand>
        <name>Zn(2+)</name>
        <dbReference type="ChEBI" id="CHEBI:29105"/>
        <label>2</label>
    </ligand>
</feature>
<feature type="binding site" evidence="2">
    <location>
        <position position="175"/>
    </location>
    <ligand>
        <name>Zn(2+)</name>
        <dbReference type="ChEBI" id="CHEBI:29105"/>
        <label>1</label>
        <note>catalytic</note>
    </ligand>
</feature>
<feature type="binding site" evidence="2">
    <location>
        <begin position="200"/>
        <end position="205"/>
    </location>
    <ligand>
        <name>NAD(+)</name>
        <dbReference type="ChEBI" id="CHEBI:57540"/>
    </ligand>
</feature>
<feature type="binding site" evidence="2">
    <location>
        <position position="224"/>
    </location>
    <ligand>
        <name>NAD(+)</name>
        <dbReference type="ChEBI" id="CHEBI:57540"/>
    </ligand>
</feature>
<feature type="binding site" evidence="2">
    <location>
        <position position="229"/>
    </location>
    <ligand>
        <name>NAD(+)</name>
        <dbReference type="ChEBI" id="CHEBI:57540"/>
    </ligand>
</feature>
<feature type="binding site" evidence="2">
    <location>
        <position position="270"/>
    </location>
    <ligand>
        <name>NAD(+)</name>
        <dbReference type="ChEBI" id="CHEBI:57540"/>
    </ligand>
</feature>
<feature type="binding site" evidence="2">
    <location>
        <begin position="293"/>
        <end position="295"/>
    </location>
    <ligand>
        <name>NAD(+)</name>
        <dbReference type="ChEBI" id="CHEBI:57540"/>
    </ligand>
</feature>
<feature type="binding site" evidence="2">
    <location>
        <begin position="318"/>
        <end position="320"/>
    </location>
    <ligand>
        <name>NAD(+)</name>
        <dbReference type="ChEBI" id="CHEBI:57540"/>
    </ligand>
</feature>
<feature type="binding site" evidence="2">
    <location>
        <position position="370"/>
    </location>
    <ligand>
        <name>NAD(+)</name>
        <dbReference type="ChEBI" id="CHEBI:57540"/>
    </ligand>
</feature>
<feature type="modified residue" description="N-acetylserine" evidence="2">
    <location>
        <position position="2"/>
    </location>
</feature>
<feature type="modified residue" description="Phosphoserine" evidence="1">
    <location>
        <position position="23"/>
    </location>
</feature>
<comment type="function">
    <text evidence="2">Alcohol dehydrogenase. Oxidizes primary as well as secondary alcohols. Ethanol is a very poor substrate.</text>
</comment>
<comment type="catalytic activity">
    <reaction evidence="2">
        <text>a primary alcohol + NAD(+) = an aldehyde + NADH + H(+)</text>
        <dbReference type="Rhea" id="RHEA:10736"/>
        <dbReference type="ChEBI" id="CHEBI:15378"/>
        <dbReference type="ChEBI" id="CHEBI:15734"/>
        <dbReference type="ChEBI" id="CHEBI:17478"/>
        <dbReference type="ChEBI" id="CHEBI:57540"/>
        <dbReference type="ChEBI" id="CHEBI:57945"/>
        <dbReference type="EC" id="1.1.1.1"/>
    </reaction>
</comment>
<comment type="catalytic activity">
    <reaction evidence="2">
        <text>a secondary alcohol + NAD(+) = a ketone + NADH + H(+)</text>
        <dbReference type="Rhea" id="RHEA:10740"/>
        <dbReference type="ChEBI" id="CHEBI:15378"/>
        <dbReference type="ChEBI" id="CHEBI:17087"/>
        <dbReference type="ChEBI" id="CHEBI:35681"/>
        <dbReference type="ChEBI" id="CHEBI:57540"/>
        <dbReference type="ChEBI" id="CHEBI:57945"/>
        <dbReference type="EC" id="1.1.1.1"/>
    </reaction>
</comment>
<comment type="catalytic activity">
    <reaction evidence="2">
        <text>butan-1-ol + NAD(+) = butanal + NADH + H(+)</text>
        <dbReference type="Rhea" id="RHEA:33199"/>
        <dbReference type="ChEBI" id="CHEBI:15378"/>
        <dbReference type="ChEBI" id="CHEBI:15743"/>
        <dbReference type="ChEBI" id="CHEBI:28885"/>
        <dbReference type="ChEBI" id="CHEBI:57540"/>
        <dbReference type="ChEBI" id="CHEBI:57945"/>
    </reaction>
</comment>
<comment type="catalytic activity">
    <reaction evidence="2">
        <text>1-propanol + NAD(+) = propanal + NADH + H(+)</text>
        <dbReference type="Rhea" id="RHEA:50704"/>
        <dbReference type="ChEBI" id="CHEBI:15378"/>
        <dbReference type="ChEBI" id="CHEBI:17153"/>
        <dbReference type="ChEBI" id="CHEBI:28831"/>
        <dbReference type="ChEBI" id="CHEBI:57540"/>
        <dbReference type="ChEBI" id="CHEBI:57945"/>
    </reaction>
</comment>
<comment type="cofactor">
    <cofactor evidence="2">
        <name>Zn(2+)</name>
        <dbReference type="ChEBI" id="CHEBI:29105"/>
    </cofactor>
    <text evidence="2">Binds 2 Zn(2+) ions per subunit.</text>
</comment>
<comment type="subunit">
    <text evidence="2">Dimer of identical or heterodimer of closely related subunits alpha, beta, or gamma that are encoded by genes ADH1A, ADH1B, and ADH1C, respectively.</text>
</comment>
<comment type="subcellular location">
    <subcellularLocation>
        <location>Cytoplasm</location>
    </subcellularLocation>
</comment>
<comment type="similarity">
    <text evidence="3">Belongs to the zinc-containing alcohol dehydrogenase family.</text>
</comment>
<name>ADH1A_PONAB</name>
<keyword id="KW-0007">Acetylation</keyword>
<keyword id="KW-0963">Cytoplasm</keyword>
<keyword id="KW-0479">Metal-binding</keyword>
<keyword id="KW-0520">NAD</keyword>
<keyword id="KW-0560">Oxidoreductase</keyword>
<keyword id="KW-0597">Phosphoprotein</keyword>
<keyword id="KW-1185">Reference proteome</keyword>
<keyword id="KW-0862">Zinc</keyword>
<gene>
    <name type="primary">ADH1A</name>
</gene>
<evidence type="ECO:0000250" key="1">
    <source>
        <dbReference type="UniProtKB" id="P00325"/>
    </source>
</evidence>
<evidence type="ECO:0000250" key="2">
    <source>
        <dbReference type="UniProtKB" id="P07327"/>
    </source>
</evidence>
<evidence type="ECO:0000305" key="3"/>
<dbReference type="EC" id="1.1.1.1" evidence="2"/>
<dbReference type="EMBL" id="CR858591">
    <property type="protein sequence ID" value="CAH90813.1"/>
    <property type="molecule type" value="mRNA"/>
</dbReference>
<dbReference type="RefSeq" id="NP_001125462.1">
    <property type="nucleotide sequence ID" value="NM_001131990.1"/>
</dbReference>
<dbReference type="SMR" id="Q5RBP7"/>
<dbReference type="FunCoup" id="Q5RBP7">
    <property type="interactions" value="233"/>
</dbReference>
<dbReference type="STRING" id="9601.ENSPPYP00000016692"/>
<dbReference type="GeneID" id="100172370"/>
<dbReference type="KEGG" id="pon:100172370"/>
<dbReference type="CTD" id="124"/>
<dbReference type="eggNOG" id="KOG0022">
    <property type="taxonomic scope" value="Eukaryota"/>
</dbReference>
<dbReference type="InParanoid" id="Q5RBP7"/>
<dbReference type="OrthoDB" id="417550at2759"/>
<dbReference type="Proteomes" id="UP000001595">
    <property type="component" value="Unplaced"/>
</dbReference>
<dbReference type="GO" id="GO:0005829">
    <property type="term" value="C:cytosol"/>
    <property type="evidence" value="ECO:0007669"/>
    <property type="project" value="TreeGrafter"/>
</dbReference>
<dbReference type="GO" id="GO:0004022">
    <property type="term" value="F:alcohol dehydrogenase (NAD+) activity"/>
    <property type="evidence" value="ECO:0000250"/>
    <property type="project" value="UniProtKB"/>
</dbReference>
<dbReference type="GO" id="GO:0004745">
    <property type="term" value="F:all-trans-retinol dehydrogenase (NAD+) activity"/>
    <property type="evidence" value="ECO:0007669"/>
    <property type="project" value="TreeGrafter"/>
</dbReference>
<dbReference type="GO" id="GO:1990362">
    <property type="term" value="F:butanol dehydrogenase (NAD+) activity"/>
    <property type="evidence" value="ECO:0007669"/>
    <property type="project" value="RHEA"/>
</dbReference>
<dbReference type="GO" id="GO:0008270">
    <property type="term" value="F:zinc ion binding"/>
    <property type="evidence" value="ECO:0007669"/>
    <property type="project" value="InterPro"/>
</dbReference>
<dbReference type="GO" id="GO:0006066">
    <property type="term" value="P:alcohol metabolic process"/>
    <property type="evidence" value="ECO:0000250"/>
    <property type="project" value="UniProtKB"/>
</dbReference>
<dbReference type="GO" id="GO:0042573">
    <property type="term" value="P:retinoic acid metabolic process"/>
    <property type="evidence" value="ECO:0007669"/>
    <property type="project" value="TreeGrafter"/>
</dbReference>
<dbReference type="GO" id="GO:0042572">
    <property type="term" value="P:retinol metabolic process"/>
    <property type="evidence" value="ECO:0007669"/>
    <property type="project" value="TreeGrafter"/>
</dbReference>
<dbReference type="CDD" id="cd08299">
    <property type="entry name" value="alcohol_DH_class_I_II_IV"/>
    <property type="match status" value="1"/>
</dbReference>
<dbReference type="FunFam" id="3.40.50.720:FF:000003">
    <property type="entry name" value="S-(hydroxymethyl)glutathione dehydrogenase"/>
    <property type="match status" value="1"/>
</dbReference>
<dbReference type="FunFam" id="3.90.180.10:FF:000001">
    <property type="entry name" value="S-(hydroxymethyl)glutathione dehydrogenase"/>
    <property type="match status" value="1"/>
</dbReference>
<dbReference type="Gene3D" id="3.90.180.10">
    <property type="entry name" value="Medium-chain alcohol dehydrogenases, catalytic domain"/>
    <property type="match status" value="1"/>
</dbReference>
<dbReference type="Gene3D" id="3.40.50.720">
    <property type="entry name" value="NAD(P)-binding Rossmann-like Domain"/>
    <property type="match status" value="1"/>
</dbReference>
<dbReference type="InterPro" id="IPR013149">
    <property type="entry name" value="ADH-like_C"/>
</dbReference>
<dbReference type="InterPro" id="IPR013154">
    <property type="entry name" value="ADH-like_N"/>
</dbReference>
<dbReference type="InterPro" id="IPR002328">
    <property type="entry name" value="ADH_Zn_CS"/>
</dbReference>
<dbReference type="InterPro" id="IPR011032">
    <property type="entry name" value="GroES-like_sf"/>
</dbReference>
<dbReference type="InterPro" id="IPR036291">
    <property type="entry name" value="NAD(P)-bd_dom_sf"/>
</dbReference>
<dbReference type="InterPro" id="IPR020843">
    <property type="entry name" value="PKS_ER"/>
</dbReference>
<dbReference type="PANTHER" id="PTHR43880">
    <property type="entry name" value="ALCOHOL DEHYDROGENASE"/>
    <property type="match status" value="1"/>
</dbReference>
<dbReference type="PANTHER" id="PTHR43880:SF1">
    <property type="entry name" value="ALCOHOL DEHYDROGENASE 1A"/>
    <property type="match status" value="1"/>
</dbReference>
<dbReference type="Pfam" id="PF08240">
    <property type="entry name" value="ADH_N"/>
    <property type="match status" value="1"/>
</dbReference>
<dbReference type="Pfam" id="PF00107">
    <property type="entry name" value="ADH_zinc_N"/>
    <property type="match status" value="1"/>
</dbReference>
<dbReference type="SMART" id="SM00829">
    <property type="entry name" value="PKS_ER"/>
    <property type="match status" value="1"/>
</dbReference>
<dbReference type="SUPFAM" id="SSF50129">
    <property type="entry name" value="GroES-like"/>
    <property type="match status" value="2"/>
</dbReference>
<dbReference type="SUPFAM" id="SSF51735">
    <property type="entry name" value="NAD(P)-binding Rossmann-fold domains"/>
    <property type="match status" value="1"/>
</dbReference>
<dbReference type="PROSITE" id="PS00059">
    <property type="entry name" value="ADH_ZINC"/>
    <property type="match status" value="1"/>
</dbReference>
<protein>
    <recommendedName>
        <fullName>Alcohol dehydrogenase 1A</fullName>
        <ecNumber evidence="2">1.1.1.1</ecNumber>
    </recommendedName>
    <alternativeName>
        <fullName>Alcohol dehydrogenase subunit alpha</fullName>
    </alternativeName>
</protein>
<accession>Q5RBP7</accession>
<organism>
    <name type="scientific">Pongo abelii</name>
    <name type="common">Sumatran orangutan</name>
    <name type="synonym">Pongo pygmaeus abelii</name>
    <dbReference type="NCBI Taxonomy" id="9601"/>
    <lineage>
        <taxon>Eukaryota</taxon>
        <taxon>Metazoa</taxon>
        <taxon>Chordata</taxon>
        <taxon>Craniata</taxon>
        <taxon>Vertebrata</taxon>
        <taxon>Euteleostomi</taxon>
        <taxon>Mammalia</taxon>
        <taxon>Eutheria</taxon>
        <taxon>Euarchontoglires</taxon>
        <taxon>Primates</taxon>
        <taxon>Haplorrhini</taxon>
        <taxon>Catarrhini</taxon>
        <taxon>Hominidae</taxon>
        <taxon>Pongo</taxon>
    </lineage>
</organism>
<reference key="1">
    <citation type="submission" date="2004-11" db="EMBL/GenBank/DDBJ databases">
        <authorList>
            <consortium name="The German cDNA consortium"/>
        </authorList>
    </citation>
    <scope>NUCLEOTIDE SEQUENCE [LARGE SCALE MRNA]</scope>
    <source>
        <tissue>Liver</tissue>
    </source>
</reference>
<proteinExistence type="evidence at transcript level"/>